<reference key="1">
    <citation type="journal article" date="2011" name="J. Bacteriol.">
        <title>Genome sequence of the 1,4-dioxane-degrading Pseudonocardia dioxanivorans strain CB1190.</title>
        <authorList>
            <person name="Sales C.M."/>
            <person name="Mahendra S."/>
            <person name="Grostern A."/>
            <person name="Parales R.E."/>
            <person name="Goodwin L.A."/>
            <person name="Woyke T."/>
            <person name="Nolan M."/>
            <person name="Lapidus A."/>
            <person name="Chertkov O."/>
            <person name="Ovchinnikova G."/>
            <person name="Sczyrba A."/>
            <person name="Alvarez-Cohen L."/>
        </authorList>
    </citation>
    <scope>NUCLEOTIDE SEQUENCE [LARGE SCALE GENOMIC DNA]</scope>
    <source>
        <strain>ATCC 55486 / DSM 44775 / JCM 13855 / CB1190</strain>
    </source>
</reference>
<reference key="2">
    <citation type="journal article" date="2013" name="Environ. Microbiol.">
        <title>RubisCO-based CO2 fixation and C1 metabolism in the actinobacterium Pseudonocardia dioxanivorans CB1190.</title>
        <authorList>
            <person name="Grostern A."/>
            <person name="Alvarez-Cohen L."/>
        </authorList>
    </citation>
    <scope>FUNCTION</scope>
    <scope>INDUCTION</scope>
    <source>
        <strain>ATCC 55486 / DSM 44775 / JCM 13855 / CB1190</strain>
    </source>
</reference>
<keyword id="KW-0113">Calvin cycle</keyword>
<keyword id="KW-0120">Carbon dioxide fixation</keyword>
<keyword id="KW-0456">Lyase</keyword>
<keyword id="KW-0460">Magnesium</keyword>
<keyword id="KW-0479">Metal-binding</keyword>
<keyword id="KW-0503">Monooxygenase</keyword>
<keyword id="KW-0560">Oxidoreductase</keyword>
<keyword id="KW-1185">Reference proteome</keyword>
<sequence length="476" mass="52620">MADRWNAGVIPYAEMGYWQPDYEPKDTDILCAFRITPQDGVPPEEAGAAVAGESSTATWTVVWTDRLTTFEHYQAKCYKVDPVPNTPGQWIAYIAYDIDLFEEASIANLTSSIIGNVFGFKPLKALRLEDMRIPTHYVKTFQGPAHGIVMEREHLGKFGRPILGATTKPKLGLSARNYGRVVYEALRGGLDFTKDDENINSQPFMRWRDRFLFCMEAVNRAQAATGEIKGHYLNVTAGTMEEMYERANFAAELGSVIVMIDLTIGYTAIQSMAKWARDNNVILHLHRAGHGTYTRQKNHGVSFRVISKWMRLAGVDHIHAGTVVGKLEGDPMTTAGFYDTLRKDSIKADLSKGLYFDQEWASMPGVMPVASGGIHAGQMHQLIHYLGEDVILQFGGGTIGHPMGIAAGAEANRVALEAMIKARNEGVDYYKEGPEILKKAASRNRALDTALATWGDITFNYESTDTPDVVATPTNA</sequence>
<feature type="chain" id="PRO_0000452045" description="Ribulose bisphosphate carboxylase large chain">
    <location>
        <begin position="1"/>
        <end position="476"/>
    </location>
</feature>
<feature type="active site" description="Proton acceptor" evidence="1">
    <location>
        <position position="168"/>
    </location>
</feature>
<feature type="active site" description="Proton acceptor" evidence="1">
    <location>
        <position position="286"/>
    </location>
</feature>
<feature type="binding site" description="in homodimeric partner" evidence="1">
    <location>
        <position position="116"/>
    </location>
    <ligand>
        <name>substrate</name>
    </ligand>
</feature>
<feature type="binding site" evidence="1">
    <location>
        <position position="166"/>
    </location>
    <ligand>
        <name>substrate</name>
    </ligand>
</feature>
<feature type="binding site" evidence="1">
    <location>
        <position position="170"/>
    </location>
    <ligand>
        <name>substrate</name>
    </ligand>
</feature>
<feature type="binding site" description="via carbamate group" evidence="1">
    <location>
        <position position="194"/>
    </location>
    <ligand>
        <name>Mg(2+)</name>
        <dbReference type="ChEBI" id="CHEBI:18420"/>
    </ligand>
</feature>
<feature type="binding site" evidence="1">
    <location>
        <position position="196"/>
    </location>
    <ligand>
        <name>Mg(2+)</name>
        <dbReference type="ChEBI" id="CHEBI:18420"/>
    </ligand>
</feature>
<feature type="binding site" evidence="1">
    <location>
        <position position="197"/>
    </location>
    <ligand>
        <name>Mg(2+)</name>
        <dbReference type="ChEBI" id="CHEBI:18420"/>
    </ligand>
</feature>
<feature type="binding site" evidence="1">
    <location>
        <position position="287"/>
    </location>
    <ligand>
        <name>substrate</name>
    </ligand>
</feature>
<feature type="binding site" evidence="1">
    <location>
        <position position="319"/>
    </location>
    <ligand>
        <name>substrate</name>
    </ligand>
</feature>
<feature type="binding site" evidence="1">
    <location>
        <position position="371"/>
    </location>
    <ligand>
        <name>substrate</name>
    </ligand>
</feature>
<feature type="site" description="Transition state stabilizer" evidence="1">
    <location>
        <position position="326"/>
    </location>
</feature>
<feature type="modified residue" description="N6-carboxylysine" evidence="1">
    <location>
        <position position="194"/>
    </location>
</feature>
<accession>F4CQ77</accession>
<comment type="function">
    <text evidence="1 4">RuBisCO catalyzes two reactions: the carboxylation of D-ribulose 1,5-bisphosphate, the primary event in carbon dioxide fixation, as well as the oxidative fragmentation of the pentose substrate. Both reactions occur simultaneously and in competition at the same active site.</text>
</comment>
<comment type="catalytic activity">
    <reaction evidence="1 4">
        <text>2 (2R)-3-phosphoglycerate + 2 H(+) = D-ribulose 1,5-bisphosphate + CO2 + H2O</text>
        <dbReference type="Rhea" id="RHEA:23124"/>
        <dbReference type="ChEBI" id="CHEBI:15377"/>
        <dbReference type="ChEBI" id="CHEBI:15378"/>
        <dbReference type="ChEBI" id="CHEBI:16526"/>
        <dbReference type="ChEBI" id="CHEBI:57870"/>
        <dbReference type="ChEBI" id="CHEBI:58272"/>
        <dbReference type="EC" id="4.1.1.39"/>
    </reaction>
</comment>
<comment type="catalytic activity">
    <reaction evidence="1">
        <text>D-ribulose 1,5-bisphosphate + O2 = 2-phosphoglycolate + (2R)-3-phosphoglycerate + 2 H(+)</text>
        <dbReference type="Rhea" id="RHEA:36631"/>
        <dbReference type="ChEBI" id="CHEBI:15378"/>
        <dbReference type="ChEBI" id="CHEBI:15379"/>
        <dbReference type="ChEBI" id="CHEBI:57870"/>
        <dbReference type="ChEBI" id="CHEBI:58033"/>
        <dbReference type="ChEBI" id="CHEBI:58272"/>
    </reaction>
</comment>
<comment type="cofactor">
    <cofactor evidence="1">
        <name>Mg(2+)</name>
        <dbReference type="ChEBI" id="CHEBI:18420"/>
    </cofactor>
    <text evidence="1">Binds 1 Mg(2+) ion per subunit.</text>
</comment>
<comment type="subunit">
    <text evidence="1">Heterohexadecamer of 8 large chains and 8 small chains.</text>
</comment>
<comment type="induction">
    <text evidence="2">Transcription is 27-fold up-regulated by growth on H(2)/bicarbonate compared to pyruvate, RuBisCO activity is induced by growth on H(2), H(2)/bicarbonate, formate, methanol and CO.</text>
</comment>
<comment type="miscellaneous">
    <text evidence="1">The basic functional RuBisCO is composed of a large chain homodimer in a 'head-to-tail' conformation. In form I RuBisCO this homodimer is arranged in a barrel-like tetramer with the small subunits forming a tetrameric 'cap' on each end of the 'barrel'.</text>
</comment>
<comment type="similarity">
    <text evidence="1">Belongs to the RuBisCO large chain family. Type I subfamily.</text>
</comment>
<evidence type="ECO:0000255" key="1">
    <source>
        <dbReference type="HAMAP-Rule" id="MF_01338"/>
    </source>
</evidence>
<evidence type="ECO:0000269" key="2">
    <source>
    </source>
</evidence>
<evidence type="ECO:0000303" key="3">
    <source>
    </source>
</evidence>
<evidence type="ECO:0000305" key="4">
    <source>
    </source>
</evidence>
<proteinExistence type="evidence at transcript level"/>
<name>RBL_PSEUX</name>
<protein>
    <recommendedName>
        <fullName evidence="1 4">Ribulose bisphosphate carboxylase large chain</fullName>
        <shortName evidence="1 4">RuBisCO large subunit</shortName>
        <ecNumber evidence="1 4">4.1.1.39</ecNumber>
    </recommendedName>
</protein>
<organism>
    <name type="scientific">Pseudonocardia dioxanivorans (strain ATCC 55486 / DSM 44775 / JCM 13855 / CB1190)</name>
    <dbReference type="NCBI Taxonomy" id="675635"/>
    <lineage>
        <taxon>Bacteria</taxon>
        <taxon>Bacillati</taxon>
        <taxon>Actinomycetota</taxon>
        <taxon>Actinomycetes</taxon>
        <taxon>Pseudonocardiales</taxon>
        <taxon>Pseudonocardiaceae</taxon>
        <taxon>Pseudonocardia</taxon>
    </lineage>
</organism>
<gene>
    <name evidence="1 3" type="primary">cbbL</name>
    <name type="ordered locus">Psed_6249</name>
</gene>
<dbReference type="EC" id="4.1.1.39" evidence="1 4"/>
<dbReference type="EMBL" id="CP002593">
    <property type="protein sequence ID" value="AEA28350.1"/>
    <property type="molecule type" value="Genomic_DNA"/>
</dbReference>
<dbReference type="RefSeq" id="WP_013678237.1">
    <property type="nucleotide sequence ID" value="NC_015312.1"/>
</dbReference>
<dbReference type="SMR" id="F4CQ77"/>
<dbReference type="STRING" id="675635.Psed_6249"/>
<dbReference type="KEGG" id="pdx:Psed_6249"/>
<dbReference type="eggNOG" id="COG1850">
    <property type="taxonomic scope" value="Bacteria"/>
</dbReference>
<dbReference type="HOGENOM" id="CLU_031450_2_0_11"/>
<dbReference type="OrthoDB" id="9764279at2"/>
<dbReference type="Proteomes" id="UP000007809">
    <property type="component" value="Chromosome"/>
</dbReference>
<dbReference type="GO" id="GO:0000287">
    <property type="term" value="F:magnesium ion binding"/>
    <property type="evidence" value="ECO:0007669"/>
    <property type="project" value="UniProtKB-UniRule"/>
</dbReference>
<dbReference type="GO" id="GO:0004497">
    <property type="term" value="F:monooxygenase activity"/>
    <property type="evidence" value="ECO:0007669"/>
    <property type="project" value="UniProtKB-KW"/>
</dbReference>
<dbReference type="GO" id="GO:0016984">
    <property type="term" value="F:ribulose-bisphosphate carboxylase activity"/>
    <property type="evidence" value="ECO:0007669"/>
    <property type="project" value="UniProtKB-UniRule"/>
</dbReference>
<dbReference type="GO" id="GO:0019253">
    <property type="term" value="P:reductive pentose-phosphate cycle"/>
    <property type="evidence" value="ECO:0007669"/>
    <property type="project" value="UniProtKB-UniRule"/>
</dbReference>
<dbReference type="CDD" id="cd08212">
    <property type="entry name" value="RuBisCO_large_I"/>
    <property type="match status" value="1"/>
</dbReference>
<dbReference type="Gene3D" id="3.20.20.110">
    <property type="entry name" value="Ribulose bisphosphate carboxylase, large subunit, C-terminal domain"/>
    <property type="match status" value="1"/>
</dbReference>
<dbReference type="Gene3D" id="3.30.70.150">
    <property type="entry name" value="RuBisCO large subunit, N-terminal domain"/>
    <property type="match status" value="1"/>
</dbReference>
<dbReference type="HAMAP" id="MF_01338">
    <property type="entry name" value="RuBisCO_L_type1"/>
    <property type="match status" value="1"/>
</dbReference>
<dbReference type="InterPro" id="IPR033966">
    <property type="entry name" value="RuBisCO"/>
</dbReference>
<dbReference type="InterPro" id="IPR020878">
    <property type="entry name" value="RuBisCo_large_chain_AS"/>
</dbReference>
<dbReference type="InterPro" id="IPR000685">
    <property type="entry name" value="RuBisCO_lsu_C"/>
</dbReference>
<dbReference type="InterPro" id="IPR036376">
    <property type="entry name" value="RuBisCO_lsu_C_sf"/>
</dbReference>
<dbReference type="InterPro" id="IPR017443">
    <property type="entry name" value="RuBisCO_lsu_fd_N"/>
</dbReference>
<dbReference type="InterPro" id="IPR036422">
    <property type="entry name" value="RuBisCO_lsu_N_sf"/>
</dbReference>
<dbReference type="InterPro" id="IPR020888">
    <property type="entry name" value="RuBisCO_lsuI"/>
</dbReference>
<dbReference type="NCBIfam" id="NF003252">
    <property type="entry name" value="PRK04208.1"/>
    <property type="match status" value="1"/>
</dbReference>
<dbReference type="PANTHER" id="PTHR42704">
    <property type="entry name" value="RIBULOSE BISPHOSPHATE CARBOXYLASE"/>
    <property type="match status" value="1"/>
</dbReference>
<dbReference type="PANTHER" id="PTHR42704:SF17">
    <property type="entry name" value="RIBULOSE BISPHOSPHATE CARBOXYLASE LARGE CHAIN"/>
    <property type="match status" value="1"/>
</dbReference>
<dbReference type="Pfam" id="PF00016">
    <property type="entry name" value="RuBisCO_large"/>
    <property type="match status" value="1"/>
</dbReference>
<dbReference type="Pfam" id="PF02788">
    <property type="entry name" value="RuBisCO_large_N"/>
    <property type="match status" value="1"/>
</dbReference>
<dbReference type="SFLD" id="SFLDG01052">
    <property type="entry name" value="RuBisCO"/>
    <property type="match status" value="1"/>
</dbReference>
<dbReference type="SFLD" id="SFLDS00014">
    <property type="entry name" value="RuBisCO"/>
    <property type="match status" value="1"/>
</dbReference>
<dbReference type="SFLD" id="SFLDG00301">
    <property type="entry name" value="RuBisCO-like_proteins"/>
    <property type="match status" value="1"/>
</dbReference>
<dbReference type="SUPFAM" id="SSF51649">
    <property type="entry name" value="RuBisCo, C-terminal domain"/>
    <property type="match status" value="1"/>
</dbReference>
<dbReference type="SUPFAM" id="SSF54966">
    <property type="entry name" value="RuBisCO, large subunit, small (N-terminal) domain"/>
    <property type="match status" value="1"/>
</dbReference>
<dbReference type="PROSITE" id="PS00157">
    <property type="entry name" value="RUBISCO_LARGE"/>
    <property type="match status" value="1"/>
</dbReference>